<name>CALCB_HUMAN</name>
<accession>P10092</accession>
<accession>A8K573</accession>
<accession>D3DQX4</accession>
<accession>Q569I0</accession>
<accession>Q9UCN9</accession>
<feature type="signal peptide" evidence="1">
    <location>
        <begin position="1"/>
        <end position="25"/>
    </location>
</feature>
<feature type="propeptide" id="PRO_0000004086">
    <location>
        <begin position="26"/>
        <end position="79"/>
    </location>
</feature>
<feature type="peptide" id="PRO_0000004087" description="Calcitonin gene-related peptide 2">
    <location>
        <begin position="82"/>
        <end position="118"/>
    </location>
</feature>
<feature type="propeptide" id="PRO_0000004088">
    <location>
        <begin position="124"/>
        <end position="127"/>
    </location>
</feature>
<feature type="modified residue" description="Phenylalanine amide" evidence="3">
    <location>
        <position position="118"/>
    </location>
</feature>
<feature type="disulfide bond" evidence="3">
    <location>
        <begin position="83"/>
        <end position="88"/>
    </location>
</feature>
<feature type="sequence conflict" description="In Ref. 5; CAA26249." evidence="7" ref="5">
    <original>G</original>
    <variation>S</variation>
    <location>
        <position position="73"/>
    </location>
</feature>
<reference key="1">
    <citation type="journal article" date="1986" name="FEBS Lett.">
        <title>Structure and expression of the human calcitonin/CGRP genes.</title>
        <authorList>
            <person name="Steenbergh P.H."/>
            <person name="Hoeppener J.W.M."/>
            <person name="Zandberg J."/>
            <person name="Visser A."/>
            <person name="Lips C.J.M."/>
            <person name="Jansz H.S."/>
        </authorList>
    </citation>
    <scope>NUCLEOTIDE SEQUENCE [GENOMIC DNA]</scope>
</reference>
<reference key="2">
    <citation type="journal article" date="2004" name="Nat. Genet.">
        <title>Complete sequencing and characterization of 21,243 full-length human cDNAs.</title>
        <authorList>
            <person name="Ota T."/>
            <person name="Suzuki Y."/>
            <person name="Nishikawa T."/>
            <person name="Otsuki T."/>
            <person name="Sugiyama T."/>
            <person name="Irie R."/>
            <person name="Wakamatsu A."/>
            <person name="Hayashi K."/>
            <person name="Sato H."/>
            <person name="Nagai K."/>
            <person name="Kimura K."/>
            <person name="Makita H."/>
            <person name="Sekine M."/>
            <person name="Obayashi M."/>
            <person name="Nishi T."/>
            <person name="Shibahara T."/>
            <person name="Tanaka T."/>
            <person name="Ishii S."/>
            <person name="Yamamoto J."/>
            <person name="Saito K."/>
            <person name="Kawai Y."/>
            <person name="Isono Y."/>
            <person name="Nakamura Y."/>
            <person name="Nagahari K."/>
            <person name="Murakami K."/>
            <person name="Yasuda T."/>
            <person name="Iwayanagi T."/>
            <person name="Wagatsuma M."/>
            <person name="Shiratori A."/>
            <person name="Sudo H."/>
            <person name="Hosoiri T."/>
            <person name="Kaku Y."/>
            <person name="Kodaira H."/>
            <person name="Kondo H."/>
            <person name="Sugawara M."/>
            <person name="Takahashi M."/>
            <person name="Kanda K."/>
            <person name="Yokoi T."/>
            <person name="Furuya T."/>
            <person name="Kikkawa E."/>
            <person name="Omura Y."/>
            <person name="Abe K."/>
            <person name="Kamihara K."/>
            <person name="Katsuta N."/>
            <person name="Sato K."/>
            <person name="Tanikawa M."/>
            <person name="Yamazaki M."/>
            <person name="Ninomiya K."/>
            <person name="Ishibashi T."/>
            <person name="Yamashita H."/>
            <person name="Murakawa K."/>
            <person name="Fujimori K."/>
            <person name="Tanai H."/>
            <person name="Kimata M."/>
            <person name="Watanabe M."/>
            <person name="Hiraoka S."/>
            <person name="Chiba Y."/>
            <person name="Ishida S."/>
            <person name="Ono Y."/>
            <person name="Takiguchi S."/>
            <person name="Watanabe S."/>
            <person name="Yosida M."/>
            <person name="Hotuta T."/>
            <person name="Kusano J."/>
            <person name="Kanehori K."/>
            <person name="Takahashi-Fujii A."/>
            <person name="Hara H."/>
            <person name="Tanase T.-O."/>
            <person name="Nomura Y."/>
            <person name="Togiya S."/>
            <person name="Komai F."/>
            <person name="Hara R."/>
            <person name="Takeuchi K."/>
            <person name="Arita M."/>
            <person name="Imose N."/>
            <person name="Musashino K."/>
            <person name="Yuuki H."/>
            <person name="Oshima A."/>
            <person name="Sasaki N."/>
            <person name="Aotsuka S."/>
            <person name="Yoshikawa Y."/>
            <person name="Matsunawa H."/>
            <person name="Ichihara T."/>
            <person name="Shiohata N."/>
            <person name="Sano S."/>
            <person name="Moriya S."/>
            <person name="Momiyama H."/>
            <person name="Satoh N."/>
            <person name="Takami S."/>
            <person name="Terashima Y."/>
            <person name="Suzuki O."/>
            <person name="Nakagawa S."/>
            <person name="Senoh A."/>
            <person name="Mizoguchi H."/>
            <person name="Goto Y."/>
            <person name="Shimizu F."/>
            <person name="Wakebe H."/>
            <person name="Hishigaki H."/>
            <person name="Watanabe T."/>
            <person name="Sugiyama A."/>
            <person name="Takemoto M."/>
            <person name="Kawakami B."/>
            <person name="Yamazaki M."/>
            <person name="Watanabe K."/>
            <person name="Kumagai A."/>
            <person name="Itakura S."/>
            <person name="Fukuzumi Y."/>
            <person name="Fujimori Y."/>
            <person name="Komiyama M."/>
            <person name="Tashiro H."/>
            <person name="Tanigami A."/>
            <person name="Fujiwara T."/>
            <person name="Ono T."/>
            <person name="Yamada K."/>
            <person name="Fujii Y."/>
            <person name="Ozaki K."/>
            <person name="Hirao M."/>
            <person name="Ohmori Y."/>
            <person name="Kawabata A."/>
            <person name="Hikiji T."/>
            <person name="Kobatake N."/>
            <person name="Inagaki H."/>
            <person name="Ikema Y."/>
            <person name="Okamoto S."/>
            <person name="Okitani R."/>
            <person name="Kawakami T."/>
            <person name="Noguchi S."/>
            <person name="Itoh T."/>
            <person name="Shigeta K."/>
            <person name="Senba T."/>
            <person name="Matsumura K."/>
            <person name="Nakajima Y."/>
            <person name="Mizuno T."/>
            <person name="Morinaga M."/>
            <person name="Sasaki M."/>
            <person name="Togashi T."/>
            <person name="Oyama M."/>
            <person name="Hata H."/>
            <person name="Watanabe M."/>
            <person name="Komatsu T."/>
            <person name="Mizushima-Sugano J."/>
            <person name="Satoh T."/>
            <person name="Shirai Y."/>
            <person name="Takahashi Y."/>
            <person name="Nakagawa K."/>
            <person name="Okumura K."/>
            <person name="Nagase T."/>
            <person name="Nomura N."/>
            <person name="Kikuchi H."/>
            <person name="Masuho Y."/>
            <person name="Yamashita R."/>
            <person name="Nakai K."/>
            <person name="Yada T."/>
            <person name="Nakamura Y."/>
            <person name="Ohara O."/>
            <person name="Isogai T."/>
            <person name="Sugano S."/>
        </authorList>
    </citation>
    <scope>NUCLEOTIDE SEQUENCE [LARGE SCALE MRNA]</scope>
</reference>
<reference key="3">
    <citation type="submission" date="2005-09" db="EMBL/GenBank/DDBJ databases">
        <authorList>
            <person name="Mural R.J."/>
            <person name="Istrail S."/>
            <person name="Sutton G.G."/>
            <person name="Florea L."/>
            <person name="Halpern A.L."/>
            <person name="Mobarry C.M."/>
            <person name="Lippert R."/>
            <person name="Walenz B."/>
            <person name="Shatkay H."/>
            <person name="Dew I."/>
            <person name="Miller J.R."/>
            <person name="Flanigan M.J."/>
            <person name="Edwards N.J."/>
            <person name="Bolanos R."/>
            <person name="Fasulo D."/>
            <person name="Halldorsson B.V."/>
            <person name="Hannenhalli S."/>
            <person name="Turner R."/>
            <person name="Yooseph S."/>
            <person name="Lu F."/>
            <person name="Nusskern D.R."/>
            <person name="Shue B.C."/>
            <person name="Zheng X.H."/>
            <person name="Zhong F."/>
            <person name="Delcher A.L."/>
            <person name="Huson D.H."/>
            <person name="Kravitz S.A."/>
            <person name="Mouchard L."/>
            <person name="Reinert K."/>
            <person name="Remington K.A."/>
            <person name="Clark A.G."/>
            <person name="Waterman M.S."/>
            <person name="Eichler E.E."/>
            <person name="Adams M.D."/>
            <person name="Hunkapiller M.W."/>
            <person name="Myers E.W."/>
            <person name="Venter J.C."/>
        </authorList>
    </citation>
    <scope>NUCLEOTIDE SEQUENCE [LARGE SCALE GENOMIC DNA]</scope>
</reference>
<reference key="4">
    <citation type="journal article" date="2004" name="Genome Res.">
        <title>The status, quality, and expansion of the NIH full-length cDNA project: the Mammalian Gene Collection (MGC).</title>
        <authorList>
            <consortium name="The MGC Project Team"/>
        </authorList>
    </citation>
    <scope>NUCLEOTIDE SEQUENCE [LARGE SCALE MRNA]</scope>
    <source>
        <tissue>Brain</tissue>
    </source>
</reference>
<reference key="5">
    <citation type="journal article" date="1985" name="FEBS Lett.">
        <title>A second human calcitonin/CGRP gene.</title>
        <authorList>
            <person name="Steenbergh P.H."/>
            <person name="Hoeppener J.W.M."/>
            <person name="Zandberg J."/>
            <person name="Lips C.J.M."/>
            <person name="Jansz H.S."/>
        </authorList>
    </citation>
    <scope>NUCLEOTIDE SEQUENCE [MRNA] OF 56-127</scope>
</reference>
<reference key="6">
    <citation type="journal article" date="1987" name="J. Biol. Chem.">
        <title>Identification in the human central nervous system, pituitary, and thyroid of a novel calcitonin gene-related peptide, and partial amino acid sequence in the spinal cord.</title>
        <authorList>
            <person name="Petermann J.B."/>
            <person name="Born W."/>
            <person name="Chang J.Y."/>
            <person name="Fischer J.A."/>
        </authorList>
    </citation>
    <scope>PROTEIN SEQUENCE OF 82-108</scope>
    <scope>FUNCTION</scope>
</reference>
<reference key="7">
    <citation type="journal article" date="1990" name="Biochem. Biophys. Res. Commun.">
        <title>Isolation, purification and characterization of beta-hCGRP from human spinal cord.</title>
        <authorList>
            <person name="Wimalawansa S.J."/>
            <person name="Morris H.R."/>
            <person name="Etienne A."/>
            <person name="Blench I."/>
            <person name="Panico M."/>
            <person name="McIntyre I."/>
        </authorList>
    </citation>
    <scope>PROTEIN SEQUENCE OF 82-86 AND 104-118</scope>
    <scope>AMIDATION AT PHE-118</scope>
    <scope>DISULFIDE BOND</scope>
    <source>
        <tissue>Spinal cord</tissue>
    </source>
</reference>
<reference key="8">
    <citation type="journal article" date="1992" name="Biochem. Biophys. Res. Commun.">
        <title>Isolation and characterization of peptides which act on rat platelets, from a pheochromocytoma.</title>
        <authorList>
            <person name="Kitamura K."/>
            <person name="Kangawa K."/>
            <person name="Kawamoto M."/>
            <person name="Ichiki Y."/>
            <person name="Matsuo H."/>
            <person name="Eto T."/>
        </authorList>
    </citation>
    <scope>PROTEIN SEQUENCE OF 82-104</scope>
    <scope>FUNCTION</scope>
    <scope>SUBCELLULAR LOCATION</scope>
    <source>
        <tissue>Pheochromocytoma</tissue>
    </source>
</reference>
<reference key="9">
    <citation type="journal article" date="1998" name="Nature">
        <title>RAMPs regulate the transport and ligand specificity of the calcitonin-receptor-like receptor.</title>
        <authorList>
            <person name="McLatchie L.M."/>
            <person name="Fraser N.J."/>
            <person name="Main M.J."/>
            <person name="Wise A."/>
            <person name="Brown J."/>
            <person name="Thompson N."/>
            <person name="Solari R."/>
            <person name="Lee M.G."/>
            <person name="Foord S.M."/>
        </authorList>
    </citation>
    <scope>FUNCTION</scope>
    <source>
        <tissue>Neuroblastoma</tissue>
    </source>
</reference>
<keyword id="KW-0027">Amidation</keyword>
<keyword id="KW-0165">Cleavage on pair of basic residues</keyword>
<keyword id="KW-0903">Direct protein sequencing</keyword>
<keyword id="KW-1015">Disulfide bond</keyword>
<keyword id="KW-0372">Hormone</keyword>
<keyword id="KW-1267">Proteomics identification</keyword>
<keyword id="KW-1185">Reference proteome</keyword>
<keyword id="KW-0964">Secreted</keyword>
<keyword id="KW-0732">Signal</keyword>
<proteinExistence type="evidence at protein level"/>
<comment type="function">
    <text evidence="2 4 5">CALCB/CGRP2 is a peptide hormone that induces vasodilation mediated by the CALCRL-RAMP1 receptor complex (PubMed:1318039, PubMed:9620797). Dilates a variety of vessels including the coronary, cerebral and systemic vasculature. Its abundance in the CNS also points toward a neurotransmitter or neuromodulator role (PubMed:3492492).</text>
</comment>
<comment type="interaction">
    <interactant intactId="EBI-12883326">
        <id>P10092</id>
    </interactant>
    <interactant intactId="EBI-372594">
        <id>Q99828</id>
        <label>CIB1</label>
    </interactant>
    <organismsDiffer>false</organismsDiffer>
    <experiments>3</experiments>
</comment>
<comment type="subcellular location">
    <subcellularLocation>
        <location evidence="2">Secreted</location>
    </subcellularLocation>
</comment>
<comment type="tissue specificity">
    <text evidence="4">Expressed in spinal cord, pituitary and thalamus.</text>
</comment>
<comment type="similarity">
    <text evidence="7">Belongs to the calcitonin family.</text>
</comment>
<sequence>MGFRKFSPFLALSILVLYQAGSLQAAPFRSALESSPDPATLSKEDARLLLAALVQDYVQMKASELKQEQETQGSSSAAQKRACNTATCVTHRLAGLLSRSGGMVKSNFVPTNVGSKAFGRRRRDLQA</sequence>
<evidence type="ECO:0000255" key="1"/>
<evidence type="ECO:0000269" key="2">
    <source>
    </source>
</evidence>
<evidence type="ECO:0000269" key="3">
    <source>
    </source>
</evidence>
<evidence type="ECO:0000269" key="4">
    <source>
    </source>
</evidence>
<evidence type="ECO:0000269" key="5">
    <source>
    </source>
</evidence>
<evidence type="ECO:0000303" key="6">
    <source>
    </source>
</evidence>
<evidence type="ECO:0000305" key="7"/>
<evidence type="ECO:0000312" key="8">
    <source>
        <dbReference type="HGNC" id="HGNC:1438"/>
    </source>
</evidence>
<protein>
    <recommendedName>
        <fullName>Calcitonin gene-related peptide 2</fullName>
        <shortName evidence="6">CGRP2</shortName>
    </recommendedName>
    <alternativeName>
        <fullName>Beta-type CGRP</fullName>
        <shortName>Beta-CGRP</shortName>
    </alternativeName>
    <alternativeName>
        <fullName>Calcitonin gene-related peptide II</fullName>
        <shortName>CGRP-II</shortName>
    </alternativeName>
</protein>
<organism>
    <name type="scientific">Homo sapiens</name>
    <name type="common">Human</name>
    <dbReference type="NCBI Taxonomy" id="9606"/>
    <lineage>
        <taxon>Eukaryota</taxon>
        <taxon>Metazoa</taxon>
        <taxon>Chordata</taxon>
        <taxon>Craniata</taxon>
        <taxon>Vertebrata</taxon>
        <taxon>Euteleostomi</taxon>
        <taxon>Mammalia</taxon>
        <taxon>Eutheria</taxon>
        <taxon>Euarchontoglires</taxon>
        <taxon>Primates</taxon>
        <taxon>Haplorrhini</taxon>
        <taxon>Catarrhini</taxon>
        <taxon>Hominidae</taxon>
        <taxon>Homo</taxon>
    </lineage>
</organism>
<gene>
    <name evidence="8" type="primary">CALCB</name>
    <name type="synonym">CALC2</name>
</gene>
<dbReference type="EMBL" id="X04855">
    <property type="protein sequence ID" value="CAC05295.1"/>
    <property type="molecule type" value="Genomic_DNA"/>
</dbReference>
<dbReference type="EMBL" id="X04857">
    <property type="protein sequence ID" value="CAC05295.1"/>
    <property type="status" value="JOINED"/>
    <property type="molecule type" value="Genomic_DNA"/>
</dbReference>
<dbReference type="EMBL" id="X04861">
    <property type="protein sequence ID" value="CAC05295.1"/>
    <property type="status" value="JOINED"/>
    <property type="molecule type" value="Genomic_DNA"/>
</dbReference>
<dbReference type="EMBL" id="AK291188">
    <property type="protein sequence ID" value="BAF83877.1"/>
    <property type="molecule type" value="mRNA"/>
</dbReference>
<dbReference type="EMBL" id="CH471064">
    <property type="protein sequence ID" value="EAW68466.1"/>
    <property type="molecule type" value="Genomic_DNA"/>
</dbReference>
<dbReference type="EMBL" id="CH471064">
    <property type="protein sequence ID" value="EAW68467.1"/>
    <property type="molecule type" value="Genomic_DNA"/>
</dbReference>
<dbReference type="EMBL" id="BC092468">
    <property type="protein sequence ID" value="AAH92468.1"/>
    <property type="molecule type" value="mRNA"/>
</dbReference>
<dbReference type="EMBL" id="X02404">
    <property type="protein sequence ID" value="CAA26249.1"/>
    <property type="molecule type" value="mRNA"/>
</dbReference>
<dbReference type="CCDS" id="CCDS7820.1"/>
<dbReference type="PIR" id="A25864">
    <property type="entry name" value="A25864"/>
</dbReference>
<dbReference type="PIR" id="I37232">
    <property type="entry name" value="I37232"/>
</dbReference>
<dbReference type="RefSeq" id="NP_000719.1">
    <property type="nucleotide sequence ID" value="NM_000728.4"/>
</dbReference>
<dbReference type="BMRB" id="P10092"/>
<dbReference type="BioGRID" id="107248">
    <property type="interactions" value="10"/>
</dbReference>
<dbReference type="FunCoup" id="P10092">
    <property type="interactions" value="716"/>
</dbReference>
<dbReference type="IntAct" id="P10092">
    <property type="interactions" value="8"/>
</dbReference>
<dbReference type="STRING" id="9606.ENSP00000433490"/>
<dbReference type="BindingDB" id="P10092"/>
<dbReference type="ChEMBL" id="CHEMBL3713541"/>
<dbReference type="DrugBank" id="DB14040">
    <property type="generic name" value="Eptinezumab"/>
</dbReference>
<dbReference type="DrugBank" id="DB14041">
    <property type="generic name" value="Fremanezumab"/>
</dbReference>
<dbReference type="DrugBank" id="DB14042">
    <property type="generic name" value="Galcanezumab"/>
</dbReference>
<dbReference type="DrugBank" id="DB12228">
    <property type="generic name" value="Telcagepant"/>
</dbReference>
<dbReference type="DrugCentral" id="P10092"/>
<dbReference type="GlyGen" id="P10092">
    <property type="glycosylation" value="7 sites, 1 O-linked glycan (7 sites)"/>
</dbReference>
<dbReference type="iPTMnet" id="P10092"/>
<dbReference type="PhosphoSitePlus" id="P10092"/>
<dbReference type="BioMuta" id="CALCB"/>
<dbReference type="DMDM" id="115487"/>
<dbReference type="MassIVE" id="P10092"/>
<dbReference type="PaxDb" id="9606-ENSP00000433490"/>
<dbReference type="PeptideAtlas" id="P10092"/>
<dbReference type="ProteomicsDB" id="52565"/>
<dbReference type="Pumba" id="P10092"/>
<dbReference type="ABCD" id="P10092">
    <property type="antibodies" value="3 sequenced antibodies"/>
</dbReference>
<dbReference type="Antibodypedia" id="24714">
    <property type="antibodies" value="78 antibodies from 15 providers"/>
</dbReference>
<dbReference type="DNASU" id="797"/>
<dbReference type="Ensembl" id="ENST00000324229.11">
    <property type="protein sequence ID" value="ENSP00000346017.5"/>
    <property type="gene ID" value="ENSG00000175868.14"/>
</dbReference>
<dbReference type="Ensembl" id="ENST00000533448.1">
    <property type="protein sequence ID" value="ENSP00000433490.1"/>
    <property type="gene ID" value="ENSG00000175868.14"/>
</dbReference>
<dbReference type="GeneID" id="797"/>
<dbReference type="KEGG" id="hsa:797"/>
<dbReference type="MANE-Select" id="ENST00000324229.11">
    <property type="protein sequence ID" value="ENSP00000346017.5"/>
    <property type="RefSeq nucleotide sequence ID" value="NM_000728.4"/>
    <property type="RefSeq protein sequence ID" value="NP_000719.1"/>
</dbReference>
<dbReference type="UCSC" id="uc001mlx.2">
    <property type="organism name" value="human"/>
</dbReference>
<dbReference type="AGR" id="HGNC:1438"/>
<dbReference type="CTD" id="797"/>
<dbReference type="DisGeNET" id="797"/>
<dbReference type="GeneCards" id="CALCB"/>
<dbReference type="HGNC" id="HGNC:1438">
    <property type="gene designation" value="CALCB"/>
</dbReference>
<dbReference type="HPA" id="ENSG00000175868">
    <property type="expression patterns" value="Group enriched (brain, thyroid gland)"/>
</dbReference>
<dbReference type="MIM" id="114160">
    <property type="type" value="gene"/>
</dbReference>
<dbReference type="neXtProt" id="NX_P10092"/>
<dbReference type="OpenTargets" id="ENSG00000175868"/>
<dbReference type="PharmGKB" id="PA26030"/>
<dbReference type="VEuPathDB" id="HostDB:ENSG00000175868"/>
<dbReference type="eggNOG" id="ENOG502SQMP">
    <property type="taxonomic scope" value="Eukaryota"/>
</dbReference>
<dbReference type="GeneTree" id="ENSGT00940000156267"/>
<dbReference type="HOGENOM" id="CLU_122444_1_0_1"/>
<dbReference type="InParanoid" id="P10092"/>
<dbReference type="OMA" id="QMKASAG"/>
<dbReference type="OrthoDB" id="9929923at2759"/>
<dbReference type="PAN-GO" id="P10092">
    <property type="GO annotations" value="4 GO annotations based on evolutionary models"/>
</dbReference>
<dbReference type="PhylomeDB" id="P10092"/>
<dbReference type="TreeFam" id="TF333069"/>
<dbReference type="PathwayCommons" id="P10092"/>
<dbReference type="Reactome" id="R-HSA-418555">
    <property type="pathway name" value="G alpha (s) signalling events"/>
</dbReference>
<dbReference type="Reactome" id="R-HSA-419812">
    <property type="pathway name" value="Calcitonin-like ligand receptors"/>
</dbReference>
<dbReference type="SignaLink" id="P10092"/>
<dbReference type="BioGRID-ORCS" id="797">
    <property type="hits" value="21 hits in 1135 CRISPR screens"/>
</dbReference>
<dbReference type="ChiTaRS" id="CALCB">
    <property type="organism name" value="human"/>
</dbReference>
<dbReference type="GenomeRNAi" id="797"/>
<dbReference type="Pharos" id="P10092">
    <property type="development level" value="Tclin"/>
</dbReference>
<dbReference type="PRO" id="PR:P10092"/>
<dbReference type="Proteomes" id="UP000005640">
    <property type="component" value="Chromosome 11"/>
</dbReference>
<dbReference type="RNAct" id="P10092">
    <property type="molecule type" value="protein"/>
</dbReference>
<dbReference type="Bgee" id="ENSG00000175868">
    <property type="expression patterns" value="Expressed in dorsal root ganglion and 93 other cell types or tissues"/>
</dbReference>
<dbReference type="ExpressionAtlas" id="P10092">
    <property type="expression patterns" value="baseline and differential"/>
</dbReference>
<dbReference type="GO" id="GO:0005576">
    <property type="term" value="C:extracellular region"/>
    <property type="evidence" value="ECO:0000304"/>
    <property type="project" value="Reactome"/>
</dbReference>
<dbReference type="GO" id="GO:0005615">
    <property type="term" value="C:extracellular space"/>
    <property type="evidence" value="ECO:0000314"/>
    <property type="project" value="UniProt"/>
</dbReference>
<dbReference type="GO" id="GO:0031716">
    <property type="term" value="F:calcitonin receptor binding"/>
    <property type="evidence" value="ECO:0000318"/>
    <property type="project" value="GO_Central"/>
</dbReference>
<dbReference type="GO" id="GO:0005179">
    <property type="term" value="F:hormone activity"/>
    <property type="evidence" value="ECO:0000314"/>
    <property type="project" value="UniProt"/>
</dbReference>
<dbReference type="GO" id="GO:0005184">
    <property type="term" value="F:neuropeptide hormone activity"/>
    <property type="evidence" value="ECO:0000304"/>
    <property type="project" value="ProtInc"/>
</dbReference>
<dbReference type="GO" id="GO:0007189">
    <property type="term" value="P:adenylate cyclase-activating G protein-coupled receptor signaling pathway"/>
    <property type="evidence" value="ECO:0000318"/>
    <property type="project" value="GO_Central"/>
</dbReference>
<dbReference type="GO" id="GO:1990408">
    <property type="term" value="P:calcitonin gene-related peptide receptor signaling pathway"/>
    <property type="evidence" value="ECO:0000314"/>
    <property type="project" value="UniProt"/>
</dbReference>
<dbReference type="GO" id="GO:0006874">
    <property type="term" value="P:intracellular calcium ion homeostasis"/>
    <property type="evidence" value="ECO:0000304"/>
    <property type="project" value="ProtInc"/>
</dbReference>
<dbReference type="GO" id="GO:0051480">
    <property type="term" value="P:regulation of cytosolic calcium ion concentration"/>
    <property type="evidence" value="ECO:0000318"/>
    <property type="project" value="GO_Central"/>
</dbReference>
<dbReference type="GO" id="GO:0007165">
    <property type="term" value="P:signal transduction"/>
    <property type="evidence" value="ECO:0000304"/>
    <property type="project" value="ProtInc"/>
</dbReference>
<dbReference type="Gene3D" id="6.10.250.2190">
    <property type="match status" value="1"/>
</dbReference>
<dbReference type="InterPro" id="IPR021117">
    <property type="entry name" value="Calcitonin-like"/>
</dbReference>
<dbReference type="InterPro" id="IPR021116">
    <property type="entry name" value="Calcitonin/adrenomedullin"/>
</dbReference>
<dbReference type="InterPro" id="IPR018360">
    <property type="entry name" value="Calcitonin_CS"/>
</dbReference>
<dbReference type="InterPro" id="IPR015476">
    <property type="entry name" value="Calcitonin_gene-rel_peptide"/>
</dbReference>
<dbReference type="InterPro" id="IPR001693">
    <property type="entry name" value="Calcitonin_peptide-like"/>
</dbReference>
<dbReference type="PANTHER" id="PTHR10505:SF3">
    <property type="entry name" value="CALCITONIN GENE-RELATED PEPTIDE 2"/>
    <property type="match status" value="1"/>
</dbReference>
<dbReference type="PANTHER" id="PTHR10505">
    <property type="entry name" value="CALCITONIN-RELATED"/>
    <property type="match status" value="1"/>
</dbReference>
<dbReference type="Pfam" id="PF00214">
    <property type="entry name" value="Calc_CGRP_IAPP"/>
    <property type="match status" value="1"/>
</dbReference>
<dbReference type="PRINTS" id="PR00817">
    <property type="entry name" value="CALCITONINB"/>
</dbReference>
<dbReference type="SMART" id="SM00113">
    <property type="entry name" value="CALCITONIN"/>
    <property type="match status" value="1"/>
</dbReference>
<dbReference type="PROSITE" id="PS00258">
    <property type="entry name" value="CALCITONIN"/>
    <property type="match status" value="1"/>
</dbReference>